<organism>
    <name type="scientific">Xenopus tropicalis</name>
    <name type="common">Western clawed frog</name>
    <name type="synonym">Silurana tropicalis</name>
    <dbReference type="NCBI Taxonomy" id="8364"/>
    <lineage>
        <taxon>Eukaryota</taxon>
        <taxon>Metazoa</taxon>
        <taxon>Chordata</taxon>
        <taxon>Craniata</taxon>
        <taxon>Vertebrata</taxon>
        <taxon>Euteleostomi</taxon>
        <taxon>Amphibia</taxon>
        <taxon>Batrachia</taxon>
        <taxon>Anura</taxon>
        <taxon>Pipoidea</taxon>
        <taxon>Pipidae</taxon>
        <taxon>Xenopodinae</taxon>
        <taxon>Xenopus</taxon>
        <taxon>Silurana</taxon>
    </lineage>
</organism>
<name>ALAT2_XENTR</name>
<protein>
    <recommendedName>
        <fullName>Alanine aminotransferase 2</fullName>
        <shortName>ALT2</shortName>
        <ecNumber>2.6.1.2</ecNumber>
    </recommendedName>
    <alternativeName>
        <fullName>Glutamate pyruvate transaminase 2</fullName>
        <shortName>GPT 2</shortName>
    </alternativeName>
    <alternativeName>
        <fullName>Glutamic--alanine transaminase 2</fullName>
    </alternativeName>
    <alternativeName>
        <fullName>Glutamic--pyruvic transaminase 2</fullName>
    </alternativeName>
</protein>
<reference key="1">
    <citation type="submission" date="2006-03" db="EMBL/GenBank/DDBJ databases">
        <authorList>
            <consortium name="Sanger Xenopus tropicalis EST/cDNA project"/>
        </authorList>
    </citation>
    <scope>NUCLEOTIDE SEQUENCE [LARGE SCALE MRNA]</scope>
    <source>
        <tissue>Egg</tissue>
    </source>
</reference>
<evidence type="ECO:0000250" key="1"/>
<evidence type="ECO:0000305" key="2"/>
<proteinExistence type="evidence at transcript level"/>
<sequence length="524" mass="58311">MDSDLISSRCVWATWNVYNGRSLSGTPLAERDGKVARKMSENGTCNRILTLESMNPCIQKVEYAVRGPIVIRAVELEKELQQGVKKPFTEVIKANIGDAHAMGQKPITFLRQVSAICLYPELMNDNKFPEDVKQKAARILQACGGHSIGAYSASQGIEVIRQDVAKYIERRDGGIQSDPNNIYLSTGASDSIVTMLKLLVSGQGKSRTGVLIPIPQYPLYSAALAELNAVQVNYYLDEENCWALDINELRRSLTEARKHCDPKVLCIINPGNPTGQVQSRKCIEDVIRFAAEENLFLMADEVYQDNVYAKGCTFHSFKKVLFEMGPKYSETVELASFHSTSKGYMGECGFRGGYMEVINMDPAVKQQLTKLVSVRLCPPVPGQALLDVIVNPPKPGEPSYKQFMAEKQAVLGNLAEKARLTEEILNQSPGIRCNPVQGAMYSFPRIHIPEKAIKLAQAEGQAPDMFFCMKLLEETGICVVPGSGFGQREGTHHFRMTILPPTDKLKSLLERLKDFHQKFTEEYS</sequence>
<comment type="function">
    <text evidence="1">Catalyzes the reversible transamination between alanine and 2-oxoglutarate to form pyruvate and glutamate.</text>
</comment>
<comment type="catalytic activity">
    <reaction>
        <text>L-alanine + 2-oxoglutarate = pyruvate + L-glutamate</text>
        <dbReference type="Rhea" id="RHEA:19453"/>
        <dbReference type="ChEBI" id="CHEBI:15361"/>
        <dbReference type="ChEBI" id="CHEBI:16810"/>
        <dbReference type="ChEBI" id="CHEBI:29985"/>
        <dbReference type="ChEBI" id="CHEBI:57972"/>
        <dbReference type="EC" id="2.6.1.2"/>
    </reaction>
</comment>
<comment type="cofactor">
    <cofactor evidence="1">
        <name>pyridoxal 5'-phosphate</name>
        <dbReference type="ChEBI" id="CHEBI:597326"/>
    </cofactor>
</comment>
<comment type="pathway">
    <text>Amino-acid degradation; L-alanine degradation via transaminase pathway; pyruvate from L-alanine: step 1/1.</text>
</comment>
<comment type="subunit">
    <text evidence="1">Homodimer.</text>
</comment>
<comment type="similarity">
    <text evidence="2">Belongs to the class-I pyridoxal-phosphate-dependent aminotransferase family. Alanine aminotransferase subfamily.</text>
</comment>
<keyword id="KW-0032">Aminotransferase</keyword>
<keyword id="KW-0663">Pyridoxal phosphate</keyword>
<keyword id="KW-1185">Reference proteome</keyword>
<keyword id="KW-0808">Transferase</keyword>
<accession>Q28DB5</accession>
<dbReference type="EC" id="2.6.1.2"/>
<dbReference type="EMBL" id="CR855598">
    <property type="protein sequence ID" value="CAJ81963.1"/>
    <property type="molecule type" value="mRNA"/>
</dbReference>
<dbReference type="RefSeq" id="NP_001016805.1">
    <property type="nucleotide sequence ID" value="NM_001016805.2"/>
</dbReference>
<dbReference type="SMR" id="Q28DB5"/>
<dbReference type="STRING" id="8364.ENSXETP00000007336"/>
<dbReference type="PaxDb" id="8364-ENSXETP00000015516"/>
<dbReference type="GeneID" id="549559"/>
<dbReference type="KEGG" id="xtr:549559"/>
<dbReference type="AGR" id="Xenbase:XB-GENE-5824311"/>
<dbReference type="CTD" id="2875"/>
<dbReference type="Xenbase" id="XB-GENE-5824311">
    <property type="gene designation" value="gpt"/>
</dbReference>
<dbReference type="eggNOG" id="KOG0258">
    <property type="taxonomic scope" value="Eukaryota"/>
</dbReference>
<dbReference type="HOGENOM" id="CLU_014254_3_1_1"/>
<dbReference type="InParanoid" id="Q28DB5"/>
<dbReference type="OrthoDB" id="1732682at2759"/>
<dbReference type="TreeFam" id="TF300839"/>
<dbReference type="Reactome" id="R-XTR-70268">
    <property type="pathway name" value="Pyruvate metabolism"/>
</dbReference>
<dbReference type="Reactome" id="R-XTR-8964540">
    <property type="pathway name" value="Alanine metabolism"/>
</dbReference>
<dbReference type="UniPathway" id="UPA00528">
    <property type="reaction ID" value="UER00586"/>
</dbReference>
<dbReference type="Proteomes" id="UP000008143">
    <property type="component" value="Chromosome 6"/>
</dbReference>
<dbReference type="Bgee" id="ENSXETG00000007140">
    <property type="expression patterns" value="Expressed in 2-cell stage embryo and 17 other cell types or tissues"/>
</dbReference>
<dbReference type="GO" id="GO:0004021">
    <property type="term" value="F:L-alanine:2-oxoglutarate aminotransferase activity"/>
    <property type="evidence" value="ECO:0000250"/>
    <property type="project" value="UniProtKB"/>
</dbReference>
<dbReference type="GO" id="GO:0030170">
    <property type="term" value="F:pyridoxal phosphate binding"/>
    <property type="evidence" value="ECO:0007669"/>
    <property type="project" value="InterPro"/>
</dbReference>
<dbReference type="GO" id="GO:0006103">
    <property type="term" value="P:2-oxoglutarate metabolic process"/>
    <property type="evidence" value="ECO:0000250"/>
    <property type="project" value="UniProtKB"/>
</dbReference>
<dbReference type="GO" id="GO:0009058">
    <property type="term" value="P:biosynthetic process"/>
    <property type="evidence" value="ECO:0007669"/>
    <property type="project" value="InterPro"/>
</dbReference>
<dbReference type="GO" id="GO:0042853">
    <property type="term" value="P:L-alanine catabolic process"/>
    <property type="evidence" value="ECO:0007669"/>
    <property type="project" value="UniProtKB-UniPathway"/>
</dbReference>
<dbReference type="GO" id="GO:0042851">
    <property type="term" value="P:L-alanine metabolic process"/>
    <property type="evidence" value="ECO:0000250"/>
    <property type="project" value="UniProtKB"/>
</dbReference>
<dbReference type="CDD" id="cd00609">
    <property type="entry name" value="AAT_like"/>
    <property type="match status" value="1"/>
</dbReference>
<dbReference type="FunFam" id="1.10.287.1970:FF:000001">
    <property type="entry name" value="Alanine aminotransferase 2"/>
    <property type="match status" value="1"/>
</dbReference>
<dbReference type="FunFam" id="3.40.640.10:FF:000226">
    <property type="entry name" value="Alanine aminotransferase 2"/>
    <property type="match status" value="1"/>
</dbReference>
<dbReference type="FunFam" id="3.90.1150.10:FF:000345">
    <property type="entry name" value="Alanine aminotransferase 2"/>
    <property type="match status" value="1"/>
</dbReference>
<dbReference type="Gene3D" id="1.10.287.1970">
    <property type="match status" value="1"/>
</dbReference>
<dbReference type="Gene3D" id="3.90.1150.10">
    <property type="entry name" value="Aspartate Aminotransferase, domain 1"/>
    <property type="match status" value="1"/>
</dbReference>
<dbReference type="Gene3D" id="3.40.640.10">
    <property type="entry name" value="Type I PLP-dependent aspartate aminotransferase-like (Major domain)"/>
    <property type="match status" value="1"/>
</dbReference>
<dbReference type="InterPro" id="IPR045088">
    <property type="entry name" value="ALAT1/2-like"/>
</dbReference>
<dbReference type="InterPro" id="IPR004839">
    <property type="entry name" value="Aminotransferase_I/II_large"/>
</dbReference>
<dbReference type="InterPro" id="IPR015424">
    <property type="entry name" value="PyrdxlP-dep_Trfase"/>
</dbReference>
<dbReference type="InterPro" id="IPR015421">
    <property type="entry name" value="PyrdxlP-dep_Trfase_major"/>
</dbReference>
<dbReference type="InterPro" id="IPR015422">
    <property type="entry name" value="PyrdxlP-dep_Trfase_small"/>
</dbReference>
<dbReference type="PANTHER" id="PTHR11751">
    <property type="entry name" value="ALANINE AMINOTRANSFERASE"/>
    <property type="match status" value="1"/>
</dbReference>
<dbReference type="PANTHER" id="PTHR11751:SF308">
    <property type="entry name" value="ALANINE AMINOTRANSFERASE 1"/>
    <property type="match status" value="1"/>
</dbReference>
<dbReference type="Pfam" id="PF00155">
    <property type="entry name" value="Aminotran_1_2"/>
    <property type="match status" value="1"/>
</dbReference>
<dbReference type="SUPFAM" id="SSF53383">
    <property type="entry name" value="PLP-dependent transferases"/>
    <property type="match status" value="1"/>
</dbReference>
<feature type="chain" id="PRO_0000247536" description="Alanine aminotransferase 2">
    <location>
        <begin position="1"/>
        <end position="524"/>
    </location>
</feature>
<feature type="modified residue" description="N6-(pyridoxal phosphate)lysine" evidence="1">
    <location>
        <position position="342"/>
    </location>
</feature>
<gene>
    <name type="primary">gpt2</name>
    <name type="ORF">TEgg035f04.1</name>
</gene>